<gene>
    <name evidence="1" type="primary">mukB</name>
    <name type="ordered locus">plu1639</name>
</gene>
<protein>
    <recommendedName>
        <fullName evidence="1">Chromosome partition protein MukB</fullName>
    </recommendedName>
    <alternativeName>
        <fullName evidence="1">Structural maintenance of chromosome-related protein</fullName>
    </alternativeName>
</protein>
<proteinExistence type="inferred from homology"/>
<sequence>MIERGKFRSLTLVNWNGFFARTFDLDELVTTLSGGNGAGKSTTMAAFVTALIPDLTLLHFRNTTEAGATSGSRDKGLHGKLRAGVCYSTLDVINSRHQRVVVGVRLQQVAGRDRKVDIKPFMIQGLPTAMQPTQLLTENVGERQARVLPLNELKDRLDEMEGVQFKQFNSITDYHALMFDLGVIPKRLRSASDRSKFYRLIEASLYGGISSAITRSLRDYLLPENSGVRKAFQDMEAALRENRITLEAIRVTQSDRDLFKHLITEATAYVSADYMRHANERRTYLDQALALRGELFGSHRQLATERYRHVEMARELEEQSGASVDLEADHQAASDHLNLVQTAMRQQEKIDRYQGDLEELSYRLEEQTEVVEEAAELQAEYEARAEAAEQEVDELKSQLADYQQALDVQQTRAIQYQQALQALERARELCRLPDLAADNAEAWLETFQAKEQQATESLLTLEQKLSVADAAHSQFERAYQLVKNMVGEISRSEAWQSARELLRDWPSQQHLADRVQPLRMRLAELEQRLTNQQNAEFLLNEFCKRQGQQYQAEDLEGLQSELEARQEALSLSVNESGERRMEMRQALEQLKQKIQSLTARAPVWLAAQDTLSQLCEQNGEALASSNDVTEYMQQLLEREREATVERDEVAAQKRELEKQIERLSQPSGAEDSRMIALAERFGGVLLSEIYDDITIDDAPYFSALYGPARHGIVVPDLSLVRSHLETLEDCPEDLYLIEGDPQSFDDSVFNAEEQANAVLVKSSDRQWRYSRYPELPLFGRAARENRLEALNLERDTLAERYATLSFDVQKIQRAHQAFSQFVGKHLSVAFDTDPEAEIRELRQRHTELERELSRFEEQTQQQRQQYTQAKESLTTLNRLIPQVTLLLDETLIDRVEEIREELDEAQEAARFLQQHGSALAKLEPMVAVLQSDPQQHEQLQQDYETAKQSQHQAKQQAFALVEVVQRRAHFSYSDSAGMLSENADLNDKLRQRLEHAESDRSRAREQLRQQQAQYSQFNQVLASLKSSYETKQDMLKELHQEMKEIGVRADANAEMRARERRDQLHEALSANRSRVNQLEKQIAFCEAEMDSLQKKLRKLERDYYQIREQVVSAKAGWCAVMRMVKDNGVERRLHRRELAYMEGGALRSMSDKALGALRLAVSDNEHLRDALRLSEDPKRPERKIQFFIAVYQHLRERIRQDIIRTDDPVDAIEQMEIELARLTEELTAREQKLAISSKSVANIIRKTIQREQNRIRMLNQGLQAVSFGQVRGVRLNVNVRESHALLLDVLSEQQEQHQDLFNSQRLTFSEAMAKLYQRLNPQVDMGQRLPQTIGEELLDYRNYLELDVEVNRGSDGWLKAESGALSTGEAIGTGMSILVMVVQSWEEESRRLRGKDISPCRLLFLDEAARLDAKSIATLFELCERLQMQLIIAAPENISPEKGTTYKLVRKVFKNHEHVHVVGLRGFGQDVPATQLISDATA</sequence>
<reference key="1">
    <citation type="journal article" date="2003" name="Nat. Biotechnol.">
        <title>The genome sequence of the entomopathogenic bacterium Photorhabdus luminescens.</title>
        <authorList>
            <person name="Duchaud E."/>
            <person name="Rusniok C."/>
            <person name="Frangeul L."/>
            <person name="Buchrieser C."/>
            <person name="Givaudan A."/>
            <person name="Taourit S."/>
            <person name="Bocs S."/>
            <person name="Boursaux-Eude C."/>
            <person name="Chandler M."/>
            <person name="Charles J.-F."/>
            <person name="Dassa E."/>
            <person name="Derose R."/>
            <person name="Derzelle S."/>
            <person name="Freyssinet G."/>
            <person name="Gaudriault S."/>
            <person name="Medigue C."/>
            <person name="Lanois A."/>
            <person name="Powell K."/>
            <person name="Siguier P."/>
            <person name="Vincent R."/>
            <person name="Wingate V."/>
            <person name="Zouine M."/>
            <person name="Glaser P."/>
            <person name="Boemare N."/>
            <person name="Danchin A."/>
            <person name="Kunst F."/>
        </authorList>
    </citation>
    <scope>NUCLEOTIDE SEQUENCE [LARGE SCALE GENOMIC DNA]</scope>
    <source>
        <strain>DSM 15139 / CIP 105565 / TT01</strain>
    </source>
</reference>
<accession>Q7N6B7</accession>
<comment type="function">
    <text evidence="1">Plays a central role in chromosome condensation, segregation and cell cycle progression. Functions as a homodimer, which is essential for chromosome partition. Involved in negative DNA supercoiling in vivo, and by this means organize and compact chromosomes. May achieve or facilitate chromosome segregation by condensation DNA from both sides of a centrally located replisome during cell division.</text>
</comment>
<comment type="subunit">
    <text evidence="1">Homodimerization via its hinge domain. Binds to DNA via its C-terminal region. Interacts, and probably forms a ternary complex, with MukE and MukF via its C-terminal region. The complex formation is stimulated by calcium or magnesium. Interacts with tubulin-related protein FtsZ.</text>
</comment>
<comment type="subcellular location">
    <subcellularLocation>
        <location evidence="1">Cytoplasm</location>
        <location evidence="1">Nucleoid</location>
    </subcellularLocation>
    <text evidence="1">Restricted to the nucleoid region.</text>
</comment>
<comment type="domain">
    <text evidence="1">The hinge domain, which separates the large intramolecular coiled coil regions, allows the homodimerization, forming a V-shaped homodimer.</text>
</comment>
<comment type="similarity">
    <text evidence="1">Belongs to the SMC family. MukB subfamily.</text>
</comment>
<evidence type="ECO:0000255" key="1">
    <source>
        <dbReference type="HAMAP-Rule" id="MF_01800"/>
    </source>
</evidence>
<feature type="chain" id="PRO_0000068224" description="Chromosome partition protein MukB">
    <location>
        <begin position="1"/>
        <end position="1482"/>
    </location>
</feature>
<feature type="region of interest" description="Flexible hinge" evidence="1">
    <location>
        <begin position="666"/>
        <end position="783"/>
    </location>
</feature>
<feature type="coiled-coil region" evidence="1">
    <location>
        <begin position="333"/>
        <end position="665"/>
    </location>
</feature>
<feature type="coiled-coil region" evidence="1">
    <location>
        <begin position="784"/>
        <end position="1116"/>
    </location>
</feature>
<feature type="coiled-coil region" evidence="1">
    <location>
        <begin position="1209"/>
        <end position="1260"/>
    </location>
</feature>
<feature type="binding site" evidence="1">
    <location>
        <begin position="34"/>
        <end position="41"/>
    </location>
    <ligand>
        <name>ATP</name>
        <dbReference type="ChEBI" id="CHEBI:30616"/>
    </ligand>
</feature>
<name>MUKB_PHOLL</name>
<dbReference type="EMBL" id="BX571864">
    <property type="protein sequence ID" value="CAE13932.1"/>
    <property type="molecule type" value="Genomic_DNA"/>
</dbReference>
<dbReference type="RefSeq" id="WP_011145930.1">
    <property type="nucleotide sequence ID" value="NC_005126.1"/>
</dbReference>
<dbReference type="SMR" id="Q7N6B7"/>
<dbReference type="STRING" id="243265.plu1639"/>
<dbReference type="GeneID" id="48847926"/>
<dbReference type="KEGG" id="plu:plu1639"/>
<dbReference type="eggNOG" id="COG3096">
    <property type="taxonomic scope" value="Bacteria"/>
</dbReference>
<dbReference type="HOGENOM" id="CLU_004430_0_0_6"/>
<dbReference type="OrthoDB" id="6722439at2"/>
<dbReference type="Proteomes" id="UP000002514">
    <property type="component" value="Chromosome"/>
</dbReference>
<dbReference type="GO" id="GO:0005737">
    <property type="term" value="C:cytoplasm"/>
    <property type="evidence" value="ECO:0007669"/>
    <property type="project" value="UniProtKB-UniRule"/>
</dbReference>
<dbReference type="GO" id="GO:0009295">
    <property type="term" value="C:nucleoid"/>
    <property type="evidence" value="ECO:0007669"/>
    <property type="project" value="UniProtKB-SubCell"/>
</dbReference>
<dbReference type="GO" id="GO:0005524">
    <property type="term" value="F:ATP binding"/>
    <property type="evidence" value="ECO:0007669"/>
    <property type="project" value="UniProtKB-UniRule"/>
</dbReference>
<dbReference type="GO" id="GO:0003677">
    <property type="term" value="F:DNA binding"/>
    <property type="evidence" value="ECO:0007669"/>
    <property type="project" value="UniProtKB-UniRule"/>
</dbReference>
<dbReference type="GO" id="GO:0051301">
    <property type="term" value="P:cell division"/>
    <property type="evidence" value="ECO:0007669"/>
    <property type="project" value="UniProtKB-KW"/>
</dbReference>
<dbReference type="GO" id="GO:0030261">
    <property type="term" value="P:chromosome condensation"/>
    <property type="evidence" value="ECO:0007669"/>
    <property type="project" value="UniProtKB-KW"/>
</dbReference>
<dbReference type="GO" id="GO:0007059">
    <property type="term" value="P:chromosome segregation"/>
    <property type="evidence" value="ECO:0007669"/>
    <property type="project" value="UniProtKB-UniRule"/>
</dbReference>
<dbReference type="GO" id="GO:0006260">
    <property type="term" value="P:DNA replication"/>
    <property type="evidence" value="ECO:0007669"/>
    <property type="project" value="UniProtKB-UniRule"/>
</dbReference>
<dbReference type="FunFam" id="3.40.1140.10:FF:000001">
    <property type="entry name" value="Chromosome partition protein MukB"/>
    <property type="match status" value="1"/>
</dbReference>
<dbReference type="FunFam" id="3.40.1140.10:FF:000002">
    <property type="entry name" value="Chromosome partition protein MukB"/>
    <property type="match status" value="1"/>
</dbReference>
<dbReference type="Gene3D" id="1.10.287.1490">
    <property type="match status" value="1"/>
</dbReference>
<dbReference type="Gene3D" id="1.20.58.850">
    <property type="match status" value="1"/>
</dbReference>
<dbReference type="Gene3D" id="3.40.1140.10">
    <property type="match status" value="2"/>
</dbReference>
<dbReference type="Gene3D" id="1.20.5.420">
    <property type="entry name" value="Immunoglobulin FC, subunit C"/>
    <property type="match status" value="1"/>
</dbReference>
<dbReference type="Gene3D" id="3.30.70.3500">
    <property type="entry name" value="MukB, hinge domain"/>
    <property type="match status" value="1"/>
</dbReference>
<dbReference type="HAMAP" id="MF_01800">
    <property type="entry name" value="MukB"/>
    <property type="match status" value="1"/>
</dbReference>
<dbReference type="InterPro" id="IPR012090">
    <property type="entry name" value="MukB"/>
</dbReference>
<dbReference type="InterPro" id="IPR050308">
    <property type="entry name" value="MukB/SMC"/>
</dbReference>
<dbReference type="InterPro" id="IPR032520">
    <property type="entry name" value="MukB_hinge"/>
</dbReference>
<dbReference type="InterPro" id="IPR042501">
    <property type="entry name" value="MukB_hinge_sf"/>
</dbReference>
<dbReference type="InterPro" id="IPR007406">
    <property type="entry name" value="MukB_N_dom"/>
</dbReference>
<dbReference type="InterPro" id="IPR027417">
    <property type="entry name" value="P-loop_NTPase"/>
</dbReference>
<dbReference type="NCBIfam" id="NF003422">
    <property type="entry name" value="PRK04863.1"/>
    <property type="match status" value="1"/>
</dbReference>
<dbReference type="PANTHER" id="PTHR42963">
    <property type="entry name" value="CHROMOSOME PARTITION PROTEIN MUKB"/>
    <property type="match status" value="1"/>
</dbReference>
<dbReference type="PANTHER" id="PTHR42963:SF1">
    <property type="entry name" value="DUF4476 DOMAIN-CONTAINING PROTEIN"/>
    <property type="match status" value="1"/>
</dbReference>
<dbReference type="Pfam" id="PF04310">
    <property type="entry name" value="MukB"/>
    <property type="match status" value="1"/>
</dbReference>
<dbReference type="Pfam" id="PF16330">
    <property type="entry name" value="MukB_hinge"/>
    <property type="match status" value="1"/>
</dbReference>
<dbReference type="Pfam" id="PF13558">
    <property type="entry name" value="SbcC_Walker_B"/>
    <property type="match status" value="1"/>
</dbReference>
<dbReference type="PIRSF" id="PIRSF005246">
    <property type="entry name" value="MukB"/>
    <property type="match status" value="1"/>
</dbReference>
<dbReference type="SUPFAM" id="SSF52540">
    <property type="entry name" value="P-loop containing nucleoside triphosphate hydrolases"/>
    <property type="match status" value="2"/>
</dbReference>
<keyword id="KW-0067">ATP-binding</keyword>
<keyword id="KW-0131">Cell cycle</keyword>
<keyword id="KW-0132">Cell division</keyword>
<keyword id="KW-0159">Chromosome partition</keyword>
<keyword id="KW-0175">Coiled coil</keyword>
<keyword id="KW-0963">Cytoplasm</keyword>
<keyword id="KW-0226">DNA condensation</keyword>
<keyword id="KW-0238">DNA-binding</keyword>
<keyword id="KW-0547">Nucleotide-binding</keyword>
<keyword id="KW-1185">Reference proteome</keyword>
<organism>
    <name type="scientific">Photorhabdus laumondii subsp. laumondii (strain DSM 15139 / CIP 105565 / TT01)</name>
    <name type="common">Photorhabdus luminescens subsp. laumondii</name>
    <dbReference type="NCBI Taxonomy" id="243265"/>
    <lineage>
        <taxon>Bacteria</taxon>
        <taxon>Pseudomonadati</taxon>
        <taxon>Pseudomonadota</taxon>
        <taxon>Gammaproteobacteria</taxon>
        <taxon>Enterobacterales</taxon>
        <taxon>Morganellaceae</taxon>
        <taxon>Photorhabdus</taxon>
    </lineage>
</organism>